<dbReference type="EMBL" id="AJ512937">
    <property type="protein sequence ID" value="CAD55562.1"/>
    <property type="molecule type" value="mRNA"/>
</dbReference>
<dbReference type="EMBL" id="AC006085">
    <property type="protein sequence ID" value="AAD30650.1"/>
    <property type="status" value="ALT_SEQ"/>
    <property type="molecule type" value="Genomic_DNA"/>
</dbReference>
<dbReference type="EMBL" id="AC024261">
    <property type="protein sequence ID" value="AAG52627.1"/>
    <property type="molecule type" value="Genomic_DNA"/>
</dbReference>
<dbReference type="EMBL" id="CP002684">
    <property type="protein sequence ID" value="AEE32661.1"/>
    <property type="molecule type" value="Genomic_DNA"/>
</dbReference>
<dbReference type="EMBL" id="BT025642">
    <property type="protein sequence ID" value="ABF74703.1"/>
    <property type="molecule type" value="mRNA"/>
</dbReference>
<dbReference type="EMBL" id="AK226520">
    <property type="protein sequence ID" value="BAE98660.1"/>
    <property type="molecule type" value="mRNA"/>
</dbReference>
<dbReference type="PIR" id="A96552">
    <property type="entry name" value="A96552"/>
</dbReference>
<dbReference type="RefSeq" id="NP_175550.2">
    <property type="nucleotide sequence ID" value="NM_104017.4"/>
</dbReference>
<dbReference type="SMR" id="Q9C8J2"/>
<dbReference type="FunCoup" id="Q9C8J2">
    <property type="interactions" value="2576"/>
</dbReference>
<dbReference type="STRING" id="3702.Q9C8J2"/>
<dbReference type="PaxDb" id="3702-AT1G51390.1"/>
<dbReference type="ProteomicsDB" id="251162"/>
<dbReference type="EnsemblPlants" id="AT1G51390.1">
    <property type="protein sequence ID" value="AT1G51390.1"/>
    <property type="gene ID" value="AT1G51390"/>
</dbReference>
<dbReference type="GeneID" id="841563"/>
<dbReference type="Gramene" id="AT1G51390.1">
    <property type="protein sequence ID" value="AT1G51390.1"/>
    <property type="gene ID" value="AT1G51390"/>
</dbReference>
<dbReference type="KEGG" id="ath:AT1G51390"/>
<dbReference type="Araport" id="AT1G51390"/>
<dbReference type="TAIR" id="AT1G51390">
    <property type="gene designation" value="NFU5"/>
</dbReference>
<dbReference type="eggNOG" id="KOG2358">
    <property type="taxonomic scope" value="Eukaryota"/>
</dbReference>
<dbReference type="HOGENOM" id="CLU_060555_0_1_1"/>
<dbReference type="InParanoid" id="Q9C8J2"/>
<dbReference type="OMA" id="MAAHVRW"/>
<dbReference type="PhylomeDB" id="Q9C8J2"/>
<dbReference type="CD-CODE" id="4299E36E">
    <property type="entry name" value="Nucleolus"/>
</dbReference>
<dbReference type="PRO" id="PR:Q9C8J2"/>
<dbReference type="Proteomes" id="UP000006548">
    <property type="component" value="Chromosome 1"/>
</dbReference>
<dbReference type="ExpressionAtlas" id="Q9C8J2">
    <property type="expression patterns" value="baseline and differential"/>
</dbReference>
<dbReference type="GO" id="GO:0005739">
    <property type="term" value="C:mitochondrion"/>
    <property type="evidence" value="ECO:0007005"/>
    <property type="project" value="TAIR"/>
</dbReference>
<dbReference type="GO" id="GO:0005634">
    <property type="term" value="C:nucleus"/>
    <property type="evidence" value="ECO:0007005"/>
    <property type="project" value="TAIR"/>
</dbReference>
<dbReference type="GO" id="GO:0005524">
    <property type="term" value="F:ATP binding"/>
    <property type="evidence" value="ECO:0007005"/>
    <property type="project" value="TAIR"/>
</dbReference>
<dbReference type="GO" id="GO:0005507">
    <property type="term" value="F:copper ion binding"/>
    <property type="evidence" value="ECO:0007005"/>
    <property type="project" value="TAIR"/>
</dbReference>
<dbReference type="GO" id="GO:0005506">
    <property type="term" value="F:iron ion binding"/>
    <property type="evidence" value="ECO:0007669"/>
    <property type="project" value="InterPro"/>
</dbReference>
<dbReference type="GO" id="GO:0051536">
    <property type="term" value="F:iron-sulfur cluster binding"/>
    <property type="evidence" value="ECO:0007669"/>
    <property type="project" value="InterPro"/>
</dbReference>
<dbReference type="GO" id="GO:0005198">
    <property type="term" value="F:structural molecule activity"/>
    <property type="evidence" value="ECO:0000304"/>
    <property type="project" value="TAIR"/>
</dbReference>
<dbReference type="GO" id="GO:0016226">
    <property type="term" value="P:iron-sulfur cluster assembly"/>
    <property type="evidence" value="ECO:0007669"/>
    <property type="project" value="InterPro"/>
</dbReference>
<dbReference type="FunFam" id="3.30.300.130:FF:000001">
    <property type="entry name" value="NFU1 iron-sulfur cluster scaffold"/>
    <property type="match status" value="1"/>
</dbReference>
<dbReference type="FunFam" id="3.30.1370.70:FF:000001">
    <property type="entry name" value="NifU-like protein 4, mitochondrial"/>
    <property type="match status" value="1"/>
</dbReference>
<dbReference type="Gene3D" id="3.30.300.130">
    <property type="entry name" value="Fe-S cluster assembly (FSCA)"/>
    <property type="match status" value="1"/>
</dbReference>
<dbReference type="Gene3D" id="3.30.1370.70">
    <property type="entry name" value="Scaffold protein Nfu/NifU, N-terminal domain"/>
    <property type="match status" value="1"/>
</dbReference>
<dbReference type="InterPro" id="IPR034904">
    <property type="entry name" value="FSCA_dom_sf"/>
</dbReference>
<dbReference type="InterPro" id="IPR014824">
    <property type="entry name" value="Nfu/NifU_N"/>
</dbReference>
<dbReference type="InterPro" id="IPR036498">
    <property type="entry name" value="Nfu/NifU_N_sf"/>
</dbReference>
<dbReference type="InterPro" id="IPR035433">
    <property type="entry name" value="NFU1-like"/>
</dbReference>
<dbReference type="InterPro" id="IPR001075">
    <property type="entry name" value="NIF_FeS_clus_asmbl_NifU_C"/>
</dbReference>
<dbReference type="PANTHER" id="PTHR11178">
    <property type="entry name" value="IRON-SULFUR CLUSTER SCAFFOLD PROTEIN NFU-RELATED"/>
    <property type="match status" value="1"/>
</dbReference>
<dbReference type="PANTHER" id="PTHR11178:SF43">
    <property type="entry name" value="NIFU-LIKE PROTEIN 5, MITOCHONDRIAL"/>
    <property type="match status" value="1"/>
</dbReference>
<dbReference type="Pfam" id="PF08712">
    <property type="entry name" value="Nfu_N"/>
    <property type="match status" value="1"/>
</dbReference>
<dbReference type="Pfam" id="PF01106">
    <property type="entry name" value="NifU"/>
    <property type="match status" value="1"/>
</dbReference>
<dbReference type="PIRSF" id="PIRSF036773">
    <property type="entry name" value="HIRIP5"/>
    <property type="match status" value="1"/>
</dbReference>
<dbReference type="SMART" id="SM00932">
    <property type="entry name" value="Nfu_N"/>
    <property type="match status" value="1"/>
</dbReference>
<dbReference type="SUPFAM" id="SSF117916">
    <property type="entry name" value="Fe-S cluster assembly (FSCA) domain-like"/>
    <property type="match status" value="1"/>
</dbReference>
<dbReference type="SUPFAM" id="SSF110836">
    <property type="entry name" value="Hypothetical protein SAV1430"/>
    <property type="match status" value="1"/>
</dbReference>
<evidence type="ECO:0000255" key="1"/>
<evidence type="ECO:0000305" key="2"/>
<protein>
    <recommendedName>
        <fullName>NifU-like protein 5, mitochondrial</fullName>
        <shortName>AtNfu-I</shortName>
        <shortName>AtNfu5</shortName>
    </recommendedName>
</protein>
<reference key="1">
    <citation type="journal article" date="2003" name="Biochem. J.">
        <title>Iron-sulphur cluster assembly in plants: distinct NFU proteins in mitochondria and plastids from Arabidopsis thaliana.</title>
        <authorList>
            <person name="Leon S."/>
            <person name="Touraine B."/>
            <person name="Ribot C."/>
            <person name="Briat J.-F."/>
            <person name="Lobreaux S."/>
        </authorList>
    </citation>
    <scope>NUCLEOTIDE SEQUENCE [MRNA]</scope>
    <scope>GENE FAMILY</scope>
    <source>
        <strain>cv. Columbia</strain>
    </source>
</reference>
<reference key="2">
    <citation type="journal article" date="2000" name="Nature">
        <title>Sequence and analysis of chromosome 1 of the plant Arabidopsis thaliana.</title>
        <authorList>
            <person name="Theologis A."/>
            <person name="Ecker J.R."/>
            <person name="Palm C.J."/>
            <person name="Federspiel N.A."/>
            <person name="Kaul S."/>
            <person name="White O."/>
            <person name="Alonso J."/>
            <person name="Altafi H."/>
            <person name="Araujo R."/>
            <person name="Bowman C.L."/>
            <person name="Brooks S.Y."/>
            <person name="Buehler E."/>
            <person name="Chan A."/>
            <person name="Chao Q."/>
            <person name="Chen H."/>
            <person name="Cheuk R.F."/>
            <person name="Chin C.W."/>
            <person name="Chung M.K."/>
            <person name="Conn L."/>
            <person name="Conway A.B."/>
            <person name="Conway A.R."/>
            <person name="Creasy T.H."/>
            <person name="Dewar K."/>
            <person name="Dunn P."/>
            <person name="Etgu P."/>
            <person name="Feldblyum T.V."/>
            <person name="Feng J.-D."/>
            <person name="Fong B."/>
            <person name="Fujii C.Y."/>
            <person name="Gill J.E."/>
            <person name="Goldsmith A.D."/>
            <person name="Haas B."/>
            <person name="Hansen N.F."/>
            <person name="Hughes B."/>
            <person name="Huizar L."/>
            <person name="Hunter J.L."/>
            <person name="Jenkins J."/>
            <person name="Johnson-Hopson C."/>
            <person name="Khan S."/>
            <person name="Khaykin E."/>
            <person name="Kim C.J."/>
            <person name="Koo H.L."/>
            <person name="Kremenetskaia I."/>
            <person name="Kurtz D.B."/>
            <person name="Kwan A."/>
            <person name="Lam B."/>
            <person name="Langin-Hooper S."/>
            <person name="Lee A."/>
            <person name="Lee J.M."/>
            <person name="Lenz C.A."/>
            <person name="Li J.H."/>
            <person name="Li Y.-P."/>
            <person name="Lin X."/>
            <person name="Liu S.X."/>
            <person name="Liu Z.A."/>
            <person name="Luros J.S."/>
            <person name="Maiti R."/>
            <person name="Marziali A."/>
            <person name="Militscher J."/>
            <person name="Miranda M."/>
            <person name="Nguyen M."/>
            <person name="Nierman W.C."/>
            <person name="Osborne B.I."/>
            <person name="Pai G."/>
            <person name="Peterson J."/>
            <person name="Pham P.K."/>
            <person name="Rizzo M."/>
            <person name="Rooney T."/>
            <person name="Rowley D."/>
            <person name="Sakano H."/>
            <person name="Salzberg S.L."/>
            <person name="Schwartz J.R."/>
            <person name="Shinn P."/>
            <person name="Southwick A.M."/>
            <person name="Sun H."/>
            <person name="Tallon L.J."/>
            <person name="Tambunga G."/>
            <person name="Toriumi M.J."/>
            <person name="Town C.D."/>
            <person name="Utterback T."/>
            <person name="Van Aken S."/>
            <person name="Vaysberg M."/>
            <person name="Vysotskaia V.S."/>
            <person name="Walker M."/>
            <person name="Wu D."/>
            <person name="Yu G."/>
            <person name="Fraser C.M."/>
            <person name="Venter J.C."/>
            <person name="Davis R.W."/>
        </authorList>
    </citation>
    <scope>NUCLEOTIDE SEQUENCE [LARGE SCALE GENOMIC DNA]</scope>
    <source>
        <strain>cv. Columbia</strain>
    </source>
</reference>
<reference key="3">
    <citation type="journal article" date="2017" name="Plant J.">
        <title>Araport11: a complete reannotation of the Arabidopsis thaliana reference genome.</title>
        <authorList>
            <person name="Cheng C.Y."/>
            <person name="Krishnakumar V."/>
            <person name="Chan A.P."/>
            <person name="Thibaud-Nissen F."/>
            <person name="Schobel S."/>
            <person name="Town C.D."/>
        </authorList>
    </citation>
    <scope>GENOME REANNOTATION</scope>
    <source>
        <strain>cv. Columbia</strain>
    </source>
</reference>
<reference key="4">
    <citation type="submission" date="2006-06" db="EMBL/GenBank/DDBJ databases">
        <title>Arabidopsis ORF clones.</title>
        <authorList>
            <person name="Shinn P."/>
            <person name="Chen H."/>
            <person name="Kim C.J."/>
            <person name="Quinitio C."/>
            <person name="Ecker J.R."/>
        </authorList>
    </citation>
    <scope>NUCLEOTIDE SEQUENCE [LARGE SCALE MRNA]</scope>
    <source>
        <strain>cv. Columbia</strain>
    </source>
</reference>
<reference key="5">
    <citation type="submission" date="2006-07" db="EMBL/GenBank/DDBJ databases">
        <title>Large-scale analysis of RIKEN Arabidopsis full-length (RAFL) cDNAs.</title>
        <authorList>
            <person name="Totoki Y."/>
            <person name="Seki M."/>
            <person name="Ishida J."/>
            <person name="Nakajima M."/>
            <person name="Enju A."/>
            <person name="Kamiya A."/>
            <person name="Narusaka M."/>
            <person name="Shin-i T."/>
            <person name="Nakagawa M."/>
            <person name="Sakamoto N."/>
            <person name="Oishi K."/>
            <person name="Kohara Y."/>
            <person name="Kobayashi M."/>
            <person name="Toyoda A."/>
            <person name="Sakaki Y."/>
            <person name="Sakurai T."/>
            <person name="Iida K."/>
            <person name="Akiyama K."/>
            <person name="Satou M."/>
            <person name="Toyoda T."/>
            <person name="Konagaya A."/>
            <person name="Carninci P."/>
            <person name="Kawai J."/>
            <person name="Hayashizaki Y."/>
            <person name="Shinozaki K."/>
        </authorList>
    </citation>
    <scope>NUCLEOTIDE SEQUENCE [LARGE SCALE MRNA]</scope>
    <source>
        <strain>cv. Columbia</strain>
    </source>
</reference>
<comment type="function">
    <text evidence="2">Molecular scaffold for [Fe-S] cluster assembly of mitochondrial iron-sulfur proteins.</text>
</comment>
<comment type="subcellular location">
    <subcellularLocation>
        <location evidence="2">Mitochondrion</location>
    </subcellularLocation>
</comment>
<comment type="similarity">
    <text evidence="2">Belongs to the NifU family.</text>
</comment>
<comment type="sequence caution" evidence="2">
    <conflict type="erroneous gene model prediction">
        <sequence resource="EMBL-CDS" id="AAD30650"/>
    </conflict>
</comment>
<name>NIFU5_ARATH</name>
<sequence length="275" mass="29972">MKGLTRLLNSLSRHTASVTCSPSSSSLLISRRSLFISAATHFPVNFSESITTNASRNCSRSSSFPFNWIEQRRTMFIQTQSTPNPSSLMFSPGKPVMEIGSADFPNSRSAMSSPLAKAIFAIDGVVRVFYGSDFVTVTKSDDVTWDILKPDIFAVVMDFYSSGQPLFLDSQATAAKDTAIHEDDSETVAMIKELLETRIRPSVQDDGGDIEYCGFDTETGIVKLRMQGACSGCPSSSVTLKSGIENMLMHYVSEVKGVEQEFDGEEEGTSSGPME</sequence>
<organism>
    <name type="scientific">Arabidopsis thaliana</name>
    <name type="common">Mouse-ear cress</name>
    <dbReference type="NCBI Taxonomy" id="3702"/>
    <lineage>
        <taxon>Eukaryota</taxon>
        <taxon>Viridiplantae</taxon>
        <taxon>Streptophyta</taxon>
        <taxon>Embryophyta</taxon>
        <taxon>Tracheophyta</taxon>
        <taxon>Spermatophyta</taxon>
        <taxon>Magnoliopsida</taxon>
        <taxon>eudicotyledons</taxon>
        <taxon>Gunneridae</taxon>
        <taxon>Pentapetalae</taxon>
        <taxon>rosids</taxon>
        <taxon>malvids</taxon>
        <taxon>Brassicales</taxon>
        <taxon>Brassicaceae</taxon>
        <taxon>Camelineae</taxon>
        <taxon>Arabidopsis</taxon>
    </lineage>
</organism>
<accession>Q9C8J2</accession>
<accession>Q9SYE1</accession>
<keyword id="KW-0496">Mitochondrion</keyword>
<keyword id="KW-1185">Reference proteome</keyword>
<keyword id="KW-0809">Transit peptide</keyword>
<gene>
    <name type="primary">NIFU5</name>
    <name type="synonym">NFU1</name>
    <name type="synonym">NFU5</name>
    <name type="ordered locus">At1g51390</name>
    <name type="ORF">F11M15.25</name>
    <name type="ORF">F5D21.13</name>
</gene>
<proteinExistence type="evidence at transcript level"/>
<feature type="transit peptide" description="Mitochondrion" evidence="1">
    <location>
        <begin position="1"/>
        <end position="61"/>
    </location>
</feature>
<feature type="chain" id="PRO_0000255239" description="NifU-like protein 5, mitochondrial">
    <location>
        <begin position="62"/>
        <end position="275"/>
    </location>
</feature>